<protein>
    <recommendedName>
        <fullName evidence="1">Arginine deiminase</fullName>
        <shortName evidence="1">ADI</shortName>
        <ecNumber evidence="1">3.5.3.6</ecNumber>
    </recommendedName>
    <alternativeName>
        <fullName evidence="1">Arginine dihydrolase</fullName>
        <shortName evidence="1">AD</shortName>
    </alternativeName>
</protein>
<name>ARCA_DICNV</name>
<organism>
    <name type="scientific">Dichelobacter nodosus (strain VCS1703A)</name>
    <dbReference type="NCBI Taxonomy" id="246195"/>
    <lineage>
        <taxon>Bacteria</taxon>
        <taxon>Pseudomonadati</taxon>
        <taxon>Pseudomonadota</taxon>
        <taxon>Gammaproteobacteria</taxon>
        <taxon>Cardiobacteriales</taxon>
        <taxon>Cardiobacteriaceae</taxon>
        <taxon>Dichelobacter</taxon>
    </lineage>
</organism>
<reference key="1">
    <citation type="journal article" date="2007" name="Nat. Biotechnol.">
        <title>Genome sequence and identification of candidate vaccine antigens from the animal pathogen Dichelobacter nodosus.</title>
        <authorList>
            <person name="Myers G.S.A."/>
            <person name="Parker D."/>
            <person name="Al-Hasani K."/>
            <person name="Kennan R.M."/>
            <person name="Seemann T."/>
            <person name="Ren Q."/>
            <person name="Badger J.H."/>
            <person name="Selengut J.D."/>
            <person name="Deboy R.T."/>
            <person name="Tettelin H."/>
            <person name="Boyce J.D."/>
            <person name="McCarl V.P."/>
            <person name="Han X."/>
            <person name="Nelson W.C."/>
            <person name="Madupu R."/>
            <person name="Mohamoud Y."/>
            <person name="Holley T."/>
            <person name="Fedorova N."/>
            <person name="Khouri H."/>
            <person name="Bottomley S.P."/>
            <person name="Whittington R.J."/>
            <person name="Adler B."/>
            <person name="Songer J.G."/>
            <person name="Rood J.I."/>
            <person name="Paulsen I.T."/>
        </authorList>
    </citation>
    <scope>NUCLEOTIDE SEQUENCE [LARGE SCALE GENOMIC DNA]</scope>
    <source>
        <strain>VCS1703A</strain>
    </source>
</reference>
<feature type="chain" id="PRO_0000336662" description="Arginine deiminase">
    <location>
        <begin position="1"/>
        <end position="415"/>
    </location>
</feature>
<feature type="active site" description="Amidino-cysteine intermediate" evidence="1">
    <location>
        <position position="404"/>
    </location>
</feature>
<dbReference type="EC" id="3.5.3.6" evidence="1"/>
<dbReference type="EMBL" id="CP000513">
    <property type="protein sequence ID" value="ABQ13883.1"/>
    <property type="molecule type" value="Genomic_DNA"/>
</dbReference>
<dbReference type="RefSeq" id="WP_012031382.1">
    <property type="nucleotide sequence ID" value="NC_009446.1"/>
</dbReference>
<dbReference type="SMR" id="A5EXR1"/>
<dbReference type="STRING" id="246195.DNO_1075"/>
<dbReference type="KEGG" id="dno:DNO_1075"/>
<dbReference type="eggNOG" id="COG2235">
    <property type="taxonomic scope" value="Bacteria"/>
</dbReference>
<dbReference type="HOGENOM" id="CLU_052662_0_0_6"/>
<dbReference type="OrthoDB" id="9807502at2"/>
<dbReference type="UniPathway" id="UPA00254">
    <property type="reaction ID" value="UER00364"/>
</dbReference>
<dbReference type="Proteomes" id="UP000000248">
    <property type="component" value="Chromosome"/>
</dbReference>
<dbReference type="GO" id="GO:0005737">
    <property type="term" value="C:cytoplasm"/>
    <property type="evidence" value="ECO:0007669"/>
    <property type="project" value="UniProtKB-SubCell"/>
</dbReference>
<dbReference type="GO" id="GO:0016990">
    <property type="term" value="F:arginine deiminase activity"/>
    <property type="evidence" value="ECO:0007669"/>
    <property type="project" value="UniProtKB-UniRule"/>
</dbReference>
<dbReference type="GO" id="GO:0019547">
    <property type="term" value="P:arginine catabolic process to ornithine"/>
    <property type="evidence" value="ECO:0007669"/>
    <property type="project" value="UniProtKB-UniRule"/>
</dbReference>
<dbReference type="GO" id="GO:0019546">
    <property type="term" value="P:arginine deiminase pathway"/>
    <property type="evidence" value="ECO:0007669"/>
    <property type="project" value="TreeGrafter"/>
</dbReference>
<dbReference type="Gene3D" id="1.10.3930.10">
    <property type="entry name" value="Arginine deiminase"/>
    <property type="match status" value="1"/>
</dbReference>
<dbReference type="Gene3D" id="3.75.10.10">
    <property type="entry name" value="L-arginine/glycine Amidinotransferase, Chain A"/>
    <property type="match status" value="1"/>
</dbReference>
<dbReference type="HAMAP" id="MF_00242">
    <property type="entry name" value="Arg_deiminase"/>
    <property type="match status" value="1"/>
</dbReference>
<dbReference type="InterPro" id="IPR003876">
    <property type="entry name" value="Arg_deiminase"/>
</dbReference>
<dbReference type="NCBIfam" id="TIGR01078">
    <property type="entry name" value="arcA"/>
    <property type="match status" value="1"/>
</dbReference>
<dbReference type="NCBIfam" id="NF002381">
    <property type="entry name" value="PRK01388.1"/>
    <property type="match status" value="1"/>
</dbReference>
<dbReference type="PANTHER" id="PTHR47271">
    <property type="entry name" value="ARGININE DEIMINASE"/>
    <property type="match status" value="1"/>
</dbReference>
<dbReference type="PANTHER" id="PTHR47271:SF3">
    <property type="entry name" value="ARGININE DEIMINASE"/>
    <property type="match status" value="1"/>
</dbReference>
<dbReference type="Pfam" id="PF02274">
    <property type="entry name" value="ADI"/>
    <property type="match status" value="1"/>
</dbReference>
<dbReference type="PIRSF" id="PIRSF006356">
    <property type="entry name" value="Arg_deiminase"/>
    <property type="match status" value="1"/>
</dbReference>
<dbReference type="PRINTS" id="PR01466">
    <property type="entry name" value="ARGDEIMINASE"/>
</dbReference>
<dbReference type="SUPFAM" id="SSF55909">
    <property type="entry name" value="Pentein"/>
    <property type="match status" value="1"/>
</dbReference>
<accession>A5EXR1</accession>
<evidence type="ECO:0000255" key="1">
    <source>
        <dbReference type="HAMAP-Rule" id="MF_00242"/>
    </source>
</evidence>
<sequence>MSQYPLGVNSEVGKLRTVMVCQPGLAHERLTPDNCDELLFDDVLWVEQAQRDHQDFVEKMRARDIEVLEMHESLAETVKNPEALKWILDRKITPNLVGLPIMNELRSWFEGLDARQQADFLIGGVSVLDITPDKFSADVISLVRATQGDLGFVFPPLPNTQFTRDTTNWIYGGVTLNPMYWPARQQETLLAAAIYKFHPRFAGKVKVWWGDPDKDYGNATLEGGDVFPVGKGLVLVGMGERSSIQAITQLAQVLFAEKAAERIIVAAMPKTRSAMHLDTIFTFCDRDLINYFPKMVDQIKPYSIRPDESKPNGLDIREERKSFVDVVQEALGLKELRKVATGGNSYAADREQWDDANNVFALEPGVVVSYDRNLLTNKLLKAAGVEIVSIRSSELGRGRGGGRCMTCPIARDAAY</sequence>
<proteinExistence type="inferred from homology"/>
<comment type="catalytic activity">
    <reaction evidence="1">
        <text>L-arginine + H2O = L-citrulline + NH4(+)</text>
        <dbReference type="Rhea" id="RHEA:19597"/>
        <dbReference type="ChEBI" id="CHEBI:15377"/>
        <dbReference type="ChEBI" id="CHEBI:28938"/>
        <dbReference type="ChEBI" id="CHEBI:32682"/>
        <dbReference type="ChEBI" id="CHEBI:57743"/>
        <dbReference type="EC" id="3.5.3.6"/>
    </reaction>
</comment>
<comment type="pathway">
    <text evidence="1">Amino-acid degradation; L-arginine degradation via ADI pathway; carbamoyl phosphate from L-arginine: step 1/2.</text>
</comment>
<comment type="subcellular location">
    <subcellularLocation>
        <location evidence="1">Cytoplasm</location>
    </subcellularLocation>
</comment>
<comment type="similarity">
    <text evidence="1">Belongs to the arginine deiminase family.</text>
</comment>
<gene>
    <name evidence="1" type="primary">arcA</name>
    <name type="ordered locus">DNO_1075</name>
</gene>
<keyword id="KW-0056">Arginine metabolism</keyword>
<keyword id="KW-0963">Cytoplasm</keyword>
<keyword id="KW-0378">Hydrolase</keyword>
<keyword id="KW-1185">Reference proteome</keyword>